<sequence>MKLKRLMAALTFVAAGVGAASAVAAIDPALPEYQKASGVSGNLSSVGSDTLANLMTMWAEEYKRLYPNVNIQIQAAGSSTAPPALTEGTANLGPMSRKMKDVELQAFEQKYGYKPTAVPVAVDALAIFVHKDNPIKGLTMQQVDAIFSATRLCGSKQDVKTWGDLGLTGDWAKKPVQLFGRNSVSGTYGYFKEEALCKGDFRPNVNEQPGSASVVQSVSQSLNGIGYSGIGYKTASVKTVALAKKEGAAFVEDNEQNALNGTYPLSRFLYVYVNKAPNKPLDPLEAQFLKLVLSKTGQQVVVKDGYIPLPAKVAEKAIKELGL</sequence>
<reference key="1">
    <citation type="journal article" date="2006" name="Genome Biol.">
        <title>Genomic analysis reveals that Pseudomonas aeruginosa virulence is combinatorial.</title>
        <authorList>
            <person name="Lee D.G."/>
            <person name="Urbach J.M."/>
            <person name="Wu G."/>
            <person name="Liberati N.T."/>
            <person name="Feinbaum R.L."/>
            <person name="Miyata S."/>
            <person name="Diggins L.T."/>
            <person name="He J."/>
            <person name="Saucier M."/>
            <person name="Deziel E."/>
            <person name="Friedman L."/>
            <person name="Li L."/>
            <person name="Grills G."/>
            <person name="Montgomery K."/>
            <person name="Kucherlapati R."/>
            <person name="Rahme L.G."/>
            <person name="Ausubel F.M."/>
        </authorList>
    </citation>
    <scope>NUCLEOTIDE SEQUENCE [LARGE SCALE GENOMIC DNA]</scope>
    <source>
        <strain>UCBPP-PA14</strain>
    </source>
</reference>
<reference key="2">
    <citation type="journal article" date="2014" name="Anal. Bioanal. Chem.">
        <title>Potential of liquid-isoelectric-focusing protein fractionation to improve phosphoprotein characterization of Pseudomonas aeruginosa PA14.</title>
        <authorList>
            <person name="Ouidir T."/>
            <person name="Jarnier F."/>
            <person name="Cosette P."/>
            <person name="Jouenne T."/>
            <person name="Hardouin J."/>
        </authorList>
    </citation>
    <scope>IDENTIFICATION BY MASS SPECTROMETRY</scope>
    <source>
        <strain>UCBPP-PA14</strain>
    </source>
</reference>
<reference key="3">
    <citation type="journal article" date="2014" name="FEMS Microbiol. Lett.">
        <title>Localization of DING proteins on PstS-containing outer-surface appendages of Pseudomonas aeruginosa.</title>
        <authorList>
            <person name="Shah M."/>
            <person name="Zaborin A."/>
            <person name="Alverdy J.C."/>
            <person name="Scott K."/>
            <person name="Zaborina O."/>
        </authorList>
    </citation>
    <scope>SUBCELLULAR LOCATION</scope>
    <scope>INDUCTION</scope>
    <scope>DISRUPTION PHENOTYPE</scope>
    <source>
        <strain>UCBPP-PA14</strain>
    </source>
</reference>
<organism>
    <name type="scientific">Pseudomonas aeruginosa (strain UCBPP-PA14)</name>
    <dbReference type="NCBI Taxonomy" id="208963"/>
    <lineage>
        <taxon>Bacteria</taxon>
        <taxon>Pseudomonadati</taxon>
        <taxon>Pseudomonadota</taxon>
        <taxon>Gammaproteobacteria</taxon>
        <taxon>Pseudomonadales</taxon>
        <taxon>Pseudomonadaceae</taxon>
        <taxon>Pseudomonas</taxon>
    </lineage>
</organism>
<gene>
    <name type="primary">pstS</name>
    <name type="ordered locus">PA14_70860</name>
</gene>
<protein>
    <recommendedName>
        <fullName>Phosphate-binding protein PstS</fullName>
    </recommendedName>
</protein>
<dbReference type="EMBL" id="CP000438">
    <property type="protein sequence ID" value="ABJ14752.1"/>
    <property type="molecule type" value="Genomic_DNA"/>
</dbReference>
<dbReference type="RefSeq" id="WP_003096673.1">
    <property type="nucleotide sequence ID" value="NZ_CP034244.1"/>
</dbReference>
<dbReference type="SMR" id="Q02DZ3"/>
<dbReference type="KEGG" id="pau:PA14_70860"/>
<dbReference type="PseudoCAP" id="PA14_70860"/>
<dbReference type="HOGENOM" id="CLU_026228_6_0_6"/>
<dbReference type="BioCyc" id="PAER208963:G1G74-5963-MONOMER"/>
<dbReference type="Proteomes" id="UP000000653">
    <property type="component" value="Chromosome"/>
</dbReference>
<dbReference type="GO" id="GO:0005576">
    <property type="term" value="C:extracellular region"/>
    <property type="evidence" value="ECO:0007669"/>
    <property type="project" value="UniProtKB-SubCell"/>
</dbReference>
<dbReference type="GO" id="GO:0042597">
    <property type="term" value="C:periplasmic space"/>
    <property type="evidence" value="ECO:0007669"/>
    <property type="project" value="UniProtKB-SubCell"/>
</dbReference>
<dbReference type="GO" id="GO:0042301">
    <property type="term" value="F:phosphate ion binding"/>
    <property type="evidence" value="ECO:0007669"/>
    <property type="project" value="InterPro"/>
</dbReference>
<dbReference type="GO" id="GO:0007155">
    <property type="term" value="P:cell adhesion"/>
    <property type="evidence" value="ECO:0007669"/>
    <property type="project" value="UniProtKB-KW"/>
</dbReference>
<dbReference type="GO" id="GO:0006817">
    <property type="term" value="P:phosphate ion transport"/>
    <property type="evidence" value="ECO:0007669"/>
    <property type="project" value="UniProtKB-KW"/>
</dbReference>
<dbReference type="CDD" id="cd13566">
    <property type="entry name" value="PBP2_phosphate"/>
    <property type="match status" value="1"/>
</dbReference>
<dbReference type="FunFam" id="3.40.190.10:FF:000151">
    <property type="entry name" value="Phosphate ABC transporter periplasmic phosphate-binding protein"/>
    <property type="match status" value="1"/>
</dbReference>
<dbReference type="Gene3D" id="3.40.190.10">
    <property type="entry name" value="Periplasmic binding protein-like II"/>
    <property type="match status" value="2"/>
</dbReference>
<dbReference type="InterPro" id="IPR024370">
    <property type="entry name" value="PBP_domain"/>
</dbReference>
<dbReference type="InterPro" id="IPR011862">
    <property type="entry name" value="Phos-bd"/>
</dbReference>
<dbReference type="InterPro" id="IPR050811">
    <property type="entry name" value="Phosphate_ABC_transporter"/>
</dbReference>
<dbReference type="NCBIfam" id="TIGR02136">
    <property type="entry name" value="ptsS_2"/>
    <property type="match status" value="1"/>
</dbReference>
<dbReference type="PANTHER" id="PTHR30570">
    <property type="entry name" value="PERIPLASMIC PHOSPHATE BINDING COMPONENT OF PHOSPHATE ABC TRANSPORTER"/>
    <property type="match status" value="1"/>
</dbReference>
<dbReference type="PANTHER" id="PTHR30570:SF6">
    <property type="entry name" value="PHOSPHATE-BINDING PROTEIN PSTS"/>
    <property type="match status" value="1"/>
</dbReference>
<dbReference type="Pfam" id="PF12849">
    <property type="entry name" value="PBP_like_2"/>
    <property type="match status" value="1"/>
</dbReference>
<dbReference type="SUPFAM" id="SSF53850">
    <property type="entry name" value="Periplasmic binding protein-like II"/>
    <property type="match status" value="1"/>
</dbReference>
<feature type="signal peptide" evidence="2">
    <location>
        <begin position="1"/>
        <end position="24"/>
    </location>
</feature>
<feature type="chain" id="PRO_0000431611" description="Phosphate-binding protein PstS" evidence="2">
    <location>
        <begin position="25"/>
        <end position="323"/>
    </location>
</feature>
<comment type="function">
    <text evidence="1">Involved in the system for phosphate transport across the cytoplasmic membrane. The ability of PstS to bind phosphate may allow it to acquire phosphate from its host.</text>
</comment>
<comment type="subcellular location">
    <subcellularLocation>
        <location evidence="1">Periplasm</location>
    </subcellularLocation>
    <subcellularLocation>
        <location evidence="3">Secreted</location>
    </subcellularLocation>
    <text evidence="3">Forms long appendages distinct from flagella or pili on the cell surface in approximately 1% of cells, when overexpressed more cells form more appendages.</text>
</comment>
<comment type="induction">
    <text evidence="3">Suppressed by inorganic phosphate.</text>
</comment>
<comment type="disruption phenotype">
    <text evidence="3">Strains are still able to make extracellular appendages that include alkaline phosphatase L (phoA2, protein DING).</text>
</comment>
<comment type="similarity">
    <text evidence="4">Belongs to the PstS family.</text>
</comment>
<evidence type="ECO:0000250" key="1">
    <source>
        <dbReference type="UniProtKB" id="G3XDA8"/>
    </source>
</evidence>
<evidence type="ECO:0000255" key="2"/>
<evidence type="ECO:0000269" key="3">
    <source>
    </source>
</evidence>
<evidence type="ECO:0000305" key="4"/>
<proteinExistence type="evidence at protein level"/>
<accession>Q02DZ3</accession>
<keyword id="KW-0130">Cell adhesion</keyword>
<keyword id="KW-0574">Periplasm</keyword>
<keyword id="KW-0592">Phosphate transport</keyword>
<keyword id="KW-0964">Secreted</keyword>
<keyword id="KW-0732">Signal</keyword>
<keyword id="KW-0813">Transport</keyword>
<keyword id="KW-0843">Virulence</keyword>
<name>PSTS_PSEAB</name>